<name>VM2P2_PROMU</name>
<sequence length="484" mass="54413">MIQVLLVTICLAVFPYQGSSIILESGNVDDYEVVYPRRVSALPKGAVQPKYEDAMQYEFKVNGEAVVLHLEKNKGLFSEDYSETHYSPDGREITTYPSVEDHCYYHGRIHNDADSTASISACDGLKGYFKLQGETYLIEPLKLPDSEAHAVYKYENIEKEDEAPKMCGVTQNWESDESIKKASQLNLTPLQQRFLQRYVKLAIVVDYRMYIKYNRDSNKITVRAHEMVNHVNEMYKPLNITITLSLLQIWSQNDLITVQPASSITLRLFGNWRKTVLLNQQNHDNAQLLTDIVFNGRTIGKAPVAGMCQPDRSVGVVRDYSSNVFVVAVIMTHELGHNLGMEHDEDKNEKKCKCDTCIMAPAISDPPAQLFSDCSKNDYQLFLTVYNPQCILNAPLRTDTVSTPVSGNEFLEAGEECDCGSPENPCCDAATCKLRPGAQCAEGLCCDQCRFKKKRTICRRARGDNPDDRCTGQSADCPRNGLYG</sequence>
<evidence type="ECO:0000250" key="1"/>
<evidence type="ECO:0000250" key="2">
    <source>
        <dbReference type="UniProtKB" id="O57413"/>
    </source>
</evidence>
<evidence type="ECO:0000250" key="3">
    <source>
        <dbReference type="UniProtKB" id="P17349"/>
    </source>
</evidence>
<evidence type="ECO:0000250" key="4">
    <source>
        <dbReference type="UniProtKB" id="Q0NZX5"/>
    </source>
</evidence>
<evidence type="ECO:0000255" key="5"/>
<evidence type="ECO:0000255" key="6">
    <source>
        <dbReference type="PROSITE-ProRule" id="PRU00068"/>
    </source>
</evidence>
<evidence type="ECO:0000255" key="7">
    <source>
        <dbReference type="PROSITE-ProRule" id="PRU00276"/>
    </source>
</evidence>
<evidence type="ECO:0000305" key="8"/>
<evidence type="ECO:0000305" key="9">
    <source ref="1"/>
</evidence>
<organism>
    <name type="scientific">Protobothrops mucrosquamatus</name>
    <name type="common">Taiwan habu</name>
    <name type="synonym">Trimeresurus mucrosquamatus</name>
    <dbReference type="NCBI Taxonomy" id="103944"/>
    <lineage>
        <taxon>Eukaryota</taxon>
        <taxon>Metazoa</taxon>
        <taxon>Chordata</taxon>
        <taxon>Craniata</taxon>
        <taxon>Vertebrata</taxon>
        <taxon>Euteleostomi</taxon>
        <taxon>Lepidosauria</taxon>
        <taxon>Squamata</taxon>
        <taxon>Bifurcata</taxon>
        <taxon>Unidentata</taxon>
        <taxon>Episquamata</taxon>
        <taxon>Toxicofera</taxon>
        <taxon>Serpentes</taxon>
        <taxon>Colubroidea</taxon>
        <taxon>Viperidae</taxon>
        <taxon>Crotalinae</taxon>
        <taxon>Protobothrops</taxon>
    </lineage>
</organism>
<proteinExistence type="evidence at transcript level"/>
<comment type="function">
    <molecule>Snake venom metalloproteinase</molecule>
    <text evidence="1">Impairs hemostasis in the envenomed animal.</text>
</comment>
<comment type="function">
    <molecule>Disintegrin trimucrin</molecule>
    <text evidence="3">Inhibits platelet aggregation induced by ADP, thrombin, platelet-activating factor and collagen. Acts by inhibiting fibrinogen interaction with platelet receptors GPIIb/GPIIIa (ITGA2B/ITGB3).</text>
</comment>
<comment type="cofactor">
    <cofactor evidence="1">
        <name>Zn(2+)</name>
        <dbReference type="ChEBI" id="CHEBI:29105"/>
    </cofactor>
    <text evidence="1">Binds 1 zinc ion per subunit.</text>
</comment>
<comment type="subunit">
    <text evidence="1">Monomer.</text>
</comment>
<comment type="subcellular location">
    <subcellularLocation>
        <location evidence="9">Secreted</location>
    </subcellularLocation>
</comment>
<comment type="tissue specificity">
    <text evidence="9">Expressed by the venom gland.</text>
</comment>
<comment type="miscellaneous">
    <text>This disintegrin is 100% identical to the disintegrin of AC O57413, another disintegrin of the P-II subfamily of Protobothrops mucrosquamatus.</text>
</comment>
<comment type="similarity">
    <text evidence="8">Belongs to the venom metalloproteinase (M12B) family. P-II subfamily. P-IIa sub-subfamily.</text>
</comment>
<dbReference type="EC" id="3.4.24.-"/>
<dbReference type="EMBL" id="HQ731070">
    <property type="protein sequence ID" value="ADV71356.1"/>
    <property type="molecule type" value="mRNA"/>
</dbReference>
<dbReference type="RefSeq" id="NP_001310178.1">
    <property type="nucleotide sequence ID" value="NM_001323249.1"/>
</dbReference>
<dbReference type="SMR" id="E9NW27"/>
<dbReference type="MEROPS" id="M12.155"/>
<dbReference type="GeneID" id="107302083"/>
<dbReference type="OrthoDB" id="5951731at2759"/>
<dbReference type="GO" id="GO:0005576">
    <property type="term" value="C:extracellular region"/>
    <property type="evidence" value="ECO:0007669"/>
    <property type="project" value="UniProtKB-SubCell"/>
</dbReference>
<dbReference type="GO" id="GO:0005886">
    <property type="term" value="C:plasma membrane"/>
    <property type="evidence" value="ECO:0007669"/>
    <property type="project" value="TreeGrafter"/>
</dbReference>
<dbReference type="GO" id="GO:0046872">
    <property type="term" value="F:metal ion binding"/>
    <property type="evidence" value="ECO:0007669"/>
    <property type="project" value="UniProtKB-KW"/>
</dbReference>
<dbReference type="GO" id="GO:0004222">
    <property type="term" value="F:metalloendopeptidase activity"/>
    <property type="evidence" value="ECO:0007669"/>
    <property type="project" value="InterPro"/>
</dbReference>
<dbReference type="GO" id="GO:0090729">
    <property type="term" value="F:toxin activity"/>
    <property type="evidence" value="ECO:0007669"/>
    <property type="project" value="UniProtKB-KW"/>
</dbReference>
<dbReference type="GO" id="GO:0006508">
    <property type="term" value="P:proteolysis"/>
    <property type="evidence" value="ECO:0007669"/>
    <property type="project" value="UniProtKB-KW"/>
</dbReference>
<dbReference type="CDD" id="cd04269">
    <property type="entry name" value="ZnMc_adamalysin_II_like"/>
    <property type="match status" value="1"/>
</dbReference>
<dbReference type="FunFam" id="3.40.390.10:FF:000002">
    <property type="entry name" value="Disintegrin and metalloproteinase domain-containing protein 22"/>
    <property type="match status" value="1"/>
</dbReference>
<dbReference type="FunFam" id="4.10.70.10:FF:000005">
    <property type="entry name" value="Zinc metalloproteinase/disintegrin"/>
    <property type="match status" value="1"/>
</dbReference>
<dbReference type="Gene3D" id="3.40.390.10">
    <property type="entry name" value="Collagenase (Catalytic Domain)"/>
    <property type="match status" value="1"/>
</dbReference>
<dbReference type="Gene3D" id="4.10.70.10">
    <property type="entry name" value="Disintegrin domain"/>
    <property type="match status" value="1"/>
</dbReference>
<dbReference type="InterPro" id="IPR018358">
    <property type="entry name" value="Disintegrin_CS"/>
</dbReference>
<dbReference type="InterPro" id="IPR001762">
    <property type="entry name" value="Disintegrin_dom"/>
</dbReference>
<dbReference type="InterPro" id="IPR036436">
    <property type="entry name" value="Disintegrin_dom_sf"/>
</dbReference>
<dbReference type="InterPro" id="IPR024079">
    <property type="entry name" value="MetalloPept_cat_dom_sf"/>
</dbReference>
<dbReference type="InterPro" id="IPR001590">
    <property type="entry name" value="Peptidase_M12B"/>
</dbReference>
<dbReference type="InterPro" id="IPR002870">
    <property type="entry name" value="Peptidase_M12B_N"/>
</dbReference>
<dbReference type="InterPro" id="IPR034027">
    <property type="entry name" value="Reprolysin_adamalysin"/>
</dbReference>
<dbReference type="PANTHER" id="PTHR11905">
    <property type="entry name" value="ADAM A DISINTEGRIN AND METALLOPROTEASE DOMAIN"/>
    <property type="match status" value="1"/>
</dbReference>
<dbReference type="PANTHER" id="PTHR11905:SF32">
    <property type="entry name" value="DISINTEGRIN AND METALLOPROTEINASE DOMAIN-CONTAINING PROTEIN 28"/>
    <property type="match status" value="1"/>
</dbReference>
<dbReference type="Pfam" id="PF00200">
    <property type="entry name" value="Disintegrin"/>
    <property type="match status" value="1"/>
</dbReference>
<dbReference type="Pfam" id="PF01562">
    <property type="entry name" value="Pep_M12B_propep"/>
    <property type="match status" value="1"/>
</dbReference>
<dbReference type="Pfam" id="PF01421">
    <property type="entry name" value="Reprolysin"/>
    <property type="match status" value="1"/>
</dbReference>
<dbReference type="PRINTS" id="PR00289">
    <property type="entry name" value="DISINTEGRIN"/>
</dbReference>
<dbReference type="SMART" id="SM00050">
    <property type="entry name" value="DISIN"/>
    <property type="match status" value="1"/>
</dbReference>
<dbReference type="SUPFAM" id="SSF57552">
    <property type="entry name" value="Blood coagulation inhibitor (disintegrin)"/>
    <property type="match status" value="1"/>
</dbReference>
<dbReference type="SUPFAM" id="SSF55486">
    <property type="entry name" value="Metalloproteases ('zincins'), catalytic domain"/>
    <property type="match status" value="1"/>
</dbReference>
<dbReference type="PROSITE" id="PS50215">
    <property type="entry name" value="ADAM_MEPRO"/>
    <property type="match status" value="1"/>
</dbReference>
<dbReference type="PROSITE" id="PS00427">
    <property type="entry name" value="DISINTEGRIN_1"/>
    <property type="match status" value="1"/>
</dbReference>
<dbReference type="PROSITE" id="PS50214">
    <property type="entry name" value="DISINTEGRIN_2"/>
    <property type="match status" value="1"/>
</dbReference>
<dbReference type="PROSITE" id="PS00142">
    <property type="entry name" value="ZINC_PROTEASE"/>
    <property type="match status" value="1"/>
</dbReference>
<accession>E9NW27</accession>
<feature type="signal peptide" evidence="5">
    <location>
        <begin position="1"/>
        <end position="20"/>
    </location>
</feature>
<feature type="propeptide" id="PRO_0000417629" evidence="1">
    <location>
        <begin position="21"/>
        <end position="190"/>
    </location>
</feature>
<feature type="chain" id="PRO_0000417630" description="Snake venom metalloproteinase" evidence="1">
    <location>
        <begin position="191"/>
        <end position="395"/>
    </location>
</feature>
<feature type="propeptide" id="PRO_0000417631" evidence="1">
    <location>
        <begin position="396"/>
        <end position="413"/>
    </location>
</feature>
<feature type="chain" id="PRO_0000417632" description="Disintegrin trimucrin" evidence="2">
    <location>
        <begin position="414"/>
        <end position="484"/>
    </location>
</feature>
<feature type="domain" description="Peptidase M12B" evidence="7">
    <location>
        <begin position="197"/>
        <end position="395"/>
    </location>
</feature>
<feature type="domain" description="Disintegrin" evidence="6">
    <location>
        <begin position="403"/>
        <end position="484"/>
    </location>
</feature>
<feature type="short sequence motif" description="Cell attachment site">
    <location>
        <begin position="462"/>
        <end position="464"/>
    </location>
</feature>
<feature type="active site" evidence="7">
    <location>
        <position position="334"/>
    </location>
</feature>
<feature type="binding site" evidence="7">
    <location>
        <position position="333"/>
    </location>
    <ligand>
        <name>Zn(2+)</name>
        <dbReference type="ChEBI" id="CHEBI:29105"/>
        <note>catalytic</note>
    </ligand>
</feature>
<feature type="binding site" evidence="7">
    <location>
        <position position="337"/>
    </location>
    <ligand>
        <name>Zn(2+)</name>
        <dbReference type="ChEBI" id="CHEBI:29105"/>
        <note>catalytic</note>
    </ligand>
</feature>
<feature type="binding site" evidence="7">
    <location>
        <position position="343"/>
    </location>
    <ligand>
        <name>Zn(2+)</name>
        <dbReference type="ChEBI" id="CHEBI:29105"/>
        <note>catalytic</note>
    </ligand>
</feature>
<feature type="glycosylation site" description="N-linked (GlcNAc...) asparagine" evidence="5">
    <location>
        <position position="239"/>
    </location>
</feature>
<feature type="disulfide bond" evidence="7">
    <location>
        <begin position="308"/>
        <end position="390"/>
    </location>
</feature>
<feature type="disulfide bond" evidence="7">
    <location>
        <begin position="352"/>
        <end position="374"/>
    </location>
</feature>
<feature type="disulfide bond" evidence="7">
    <location>
        <begin position="354"/>
        <end position="357"/>
    </location>
</feature>
<feature type="disulfide bond" evidence="4">
    <location>
        <begin position="417"/>
        <end position="432"/>
    </location>
</feature>
<feature type="disulfide bond" evidence="4">
    <location>
        <begin position="419"/>
        <end position="427"/>
    </location>
</feature>
<feature type="disulfide bond" evidence="4">
    <location>
        <begin position="426"/>
        <end position="449"/>
    </location>
</feature>
<feature type="disulfide bond" evidence="4">
    <location>
        <begin position="440"/>
        <end position="446"/>
    </location>
</feature>
<feature type="disulfide bond" evidence="4">
    <location>
        <begin position="445"/>
        <end position="470"/>
    </location>
</feature>
<feature type="disulfide bond" evidence="4 6">
    <location>
        <begin position="458"/>
        <end position="477"/>
    </location>
</feature>
<protein>
    <recommendedName>
        <fullName>Zinc metalloproteinase/disintegrin PMMP-2</fullName>
    </recommendedName>
    <component>
        <recommendedName>
            <fullName>Snake venom metalloproteinase</fullName>
            <shortName>SVMP</shortName>
            <ecNumber>3.4.24.-</ecNumber>
        </recommendedName>
    </component>
    <component>
        <recommendedName>
            <fullName evidence="2">Disintegrin trimucrin</fullName>
        </recommendedName>
    </component>
</protein>
<reference key="1">
    <citation type="submission" date="2010-12" db="EMBL/GenBank/DDBJ databases">
        <title>Purification, characterization and cloning of metalloproteinases from Trimeresurus mucrosquamatus Venom.</title>
        <authorList>
            <person name="Sun Q.Y."/>
            <person name="Bao J."/>
        </authorList>
    </citation>
    <scope>NUCLEOTIDE SEQUENCE [MRNA]</scope>
    <source>
        <tissue>Venom gland</tissue>
    </source>
</reference>
<keyword id="KW-1217">Cell adhesion impairing toxin</keyword>
<keyword id="KW-1015">Disulfide bond</keyword>
<keyword id="KW-0325">Glycoprotein</keyword>
<keyword id="KW-1199">Hemostasis impairing toxin</keyword>
<keyword id="KW-0378">Hydrolase</keyword>
<keyword id="KW-0479">Metal-binding</keyword>
<keyword id="KW-0482">Metalloprotease</keyword>
<keyword id="KW-1201">Platelet aggregation inhibiting toxin</keyword>
<keyword id="KW-0645">Protease</keyword>
<keyword id="KW-0964">Secreted</keyword>
<keyword id="KW-0732">Signal</keyword>
<keyword id="KW-0800">Toxin</keyword>
<keyword id="KW-0862">Zinc</keyword>
<keyword id="KW-0865">Zymogen</keyword>